<reference key="1">
    <citation type="journal article" date="2002" name="Nature">
        <title>Genome sequence of the human malaria parasite Plasmodium falciparum.</title>
        <authorList>
            <person name="Gardner M.J."/>
            <person name="Hall N."/>
            <person name="Fung E."/>
            <person name="White O."/>
            <person name="Berriman M."/>
            <person name="Hyman R.W."/>
            <person name="Carlton J.M."/>
            <person name="Pain A."/>
            <person name="Nelson K.E."/>
            <person name="Bowman S."/>
            <person name="Paulsen I.T."/>
            <person name="James K.D."/>
            <person name="Eisen J.A."/>
            <person name="Rutherford K.M."/>
            <person name="Salzberg S.L."/>
            <person name="Craig A."/>
            <person name="Kyes S."/>
            <person name="Chan M.-S."/>
            <person name="Nene V."/>
            <person name="Shallom S.J."/>
            <person name="Suh B."/>
            <person name="Peterson J."/>
            <person name="Angiuoli S."/>
            <person name="Pertea M."/>
            <person name="Allen J."/>
            <person name="Selengut J."/>
            <person name="Haft D."/>
            <person name="Mather M.W."/>
            <person name="Vaidya A.B."/>
            <person name="Martin D.M.A."/>
            <person name="Fairlamb A.H."/>
            <person name="Fraunholz M.J."/>
            <person name="Roos D.S."/>
            <person name="Ralph S.A."/>
            <person name="McFadden G.I."/>
            <person name="Cummings L.M."/>
            <person name="Subramanian G.M."/>
            <person name="Mungall C."/>
            <person name="Venter J.C."/>
            <person name="Carucci D.J."/>
            <person name="Hoffman S.L."/>
            <person name="Newbold C."/>
            <person name="Davis R.W."/>
            <person name="Fraser C.M."/>
            <person name="Barrell B.G."/>
        </authorList>
    </citation>
    <scope>NUCLEOTIDE SEQUENCE [LARGE SCALE GENOMIC DNA]</scope>
    <source>
        <strain>3D7</strain>
    </source>
</reference>
<reference key="2">
    <citation type="journal article" date="2002" name="Nature">
        <title>Sequence of Plasmodium falciparum chromosomes 1, 3-9 and 13.</title>
        <authorList>
            <person name="Hall N."/>
            <person name="Pain A."/>
            <person name="Berriman M."/>
            <person name="Churcher C.M."/>
            <person name="Harris B."/>
            <person name="Harris D."/>
            <person name="Mungall K.L."/>
            <person name="Bowman S."/>
            <person name="Atkin R."/>
            <person name="Baker S."/>
            <person name="Barron A."/>
            <person name="Brooks K."/>
            <person name="Buckee C.O."/>
            <person name="Burrows C."/>
            <person name="Cherevach I."/>
            <person name="Chillingworth C."/>
            <person name="Chillingworth T."/>
            <person name="Christodoulou Z."/>
            <person name="Clark L."/>
            <person name="Clark R."/>
            <person name="Corton C."/>
            <person name="Cronin A."/>
            <person name="Davies R.M."/>
            <person name="Davis P."/>
            <person name="Dear P."/>
            <person name="Dearden F."/>
            <person name="Doggett J."/>
            <person name="Feltwell T."/>
            <person name="Goble A."/>
            <person name="Goodhead I."/>
            <person name="Gwilliam R."/>
            <person name="Hamlin N."/>
            <person name="Hance Z."/>
            <person name="Harper D."/>
            <person name="Hauser H."/>
            <person name="Hornsby T."/>
            <person name="Holroyd S."/>
            <person name="Horrocks P."/>
            <person name="Humphray S."/>
            <person name="Jagels K."/>
            <person name="James K.D."/>
            <person name="Johnson D."/>
            <person name="Kerhornou A."/>
            <person name="Knights A."/>
            <person name="Konfortov B."/>
            <person name="Kyes S."/>
            <person name="Larke N."/>
            <person name="Lawson D."/>
            <person name="Lennard N."/>
            <person name="Line A."/>
            <person name="Maddison M."/>
            <person name="Mclean J."/>
            <person name="Mooney P."/>
            <person name="Moule S."/>
            <person name="Murphy L."/>
            <person name="Oliver K."/>
            <person name="Ormond D."/>
            <person name="Price C."/>
            <person name="Quail M.A."/>
            <person name="Rabbinowitsch E."/>
            <person name="Rajandream M.A."/>
            <person name="Rutter S."/>
            <person name="Rutherford K.M."/>
            <person name="Sanders M."/>
            <person name="Simmonds M."/>
            <person name="Seeger K."/>
            <person name="Sharp S."/>
            <person name="Smith R."/>
            <person name="Squares R."/>
            <person name="Squares S."/>
            <person name="Stevens K."/>
            <person name="Taylor K."/>
            <person name="Tivey A."/>
            <person name="Unwin L."/>
            <person name="Whitehead S."/>
            <person name="Woodward J.R."/>
            <person name="Sulston J.E."/>
            <person name="Craig A."/>
            <person name="Newbold C."/>
            <person name="Barrell B.G."/>
        </authorList>
    </citation>
    <scope>NUCLEOTIDE SEQUENCE [LARGE SCALE GENOMIC DNA]</scope>
    <source>
        <strain>3D7</strain>
    </source>
</reference>
<reference key="3">
    <citation type="journal article" date="2007" name="PLoS ONE">
        <title>Rapid identification of malaria vaccine candidates based on alpha-helical coiled coil protein motif.</title>
        <authorList>
            <person name="Villard V."/>
            <person name="Agak G.W."/>
            <person name="Frank G."/>
            <person name="Jafarshad A."/>
            <person name="Servis C."/>
            <person name="Nebie I."/>
            <person name="Sirima S.B."/>
            <person name="Felger I."/>
            <person name="Arevalo-Herrera M."/>
            <person name="Herrera S."/>
            <person name="Heitz F."/>
            <person name="Baecker V."/>
            <person name="Druilhe P."/>
            <person name="Kajava A.V."/>
            <person name="Corradin G."/>
        </authorList>
    </citation>
    <scope>SYNTHESIS OF 7581-7613</scope>
    <scope>POSSIBLE CANDIDATE MALARIA EPITOPE</scope>
</reference>
<proteinExistence type="evidence at protein level"/>
<accession>C6KTB7</accession>
<sequence length="10287" mass="1206017">MKDLYSLYEDISENDKIIISEKLKNLLNYFQDKNKSYVSEFVVVSRTRFFKSISNYGEFLLLQSSSRVISSYEHILRLLHQAKVYLEFVRCLKLNNCSVIDNEKYEEEISKFINYLESKRKKYYYHICQILIKFIVSSLSDNTIDNKFMEKEFDIEEDNIDGYEKNVNDIEIKNEEYNTSYESQRVKDNNNSNYNNNVNIWTINDNDEKIVMEPFDELEEYGNYLYNVLNQMDNKSWKDKNHAEYLKVISLNDAIIKEDNDKNKNSENNNGLTNTSNITNNMILLPKYLENVRNCIYNHQTKSMLEVKSMIEHAMSDNIKAPLFKTGKIVSEMLPSPNYEKYWSTTQPEFSNKIDTSLVQNMIFKFFNLQKNTTPVDNMTPTNYNIKFYDIFKIILKGIYSIKCENEETHIFLNQLLNKTKKKKYPFNYNNQLLDKNVKTDDLYNYLLLPLHLYNNTHEICEGILKYTIYNNDLVLTLKIVDTFLTISVYENSLKDLVHLLNTLAECIILPYLRTEIKENIKHDTGDKDIYRTGTLCKNFETELTNEFNKISDDNNNNNNIGIIDTNKSRDNINQNTNTNNNNNNNNNNDGDRFDDDQFFDNFSNLHKLICKIPLHEYESLKLLELFSLQYPMFLKIQNKPQRCLKDISKPCEYYSNTLPIYGSYIFQIVVSFEIDNSIKVLDELGSKCKICFQLTNDNMNDENSTDITVSDDNSNIPNKEYNFLEINFQQNHMYTKYNKSSVKEEDEIEKSMKAKSSTKSNDETNKANNNKNNNNNNKNNNNNNKNNNNNNKNNNNNNKNSNNNNNNNNDTFEEYEKNNKKKKKNVQVNKLINVYDITNMNTIVFDILIDQGCFSSETNVNNVTNDNGKIVIYSNGRHLLTSNINKKIIGFNEKKGLTNNNIKLKVFTSRTCSFEFPKECYWSSAFVQELVNRKLIPETNQNFLLKNPINIIELYNKVSIALNRYLYRFCEWNNGDYKRIIENDSCYTLYNNIDINTFEALIKYTENNNKILKKLYTLSKNCALDKENYMENNKHNINYYFSLSPVKYHVRKYREYIYEWNQTSDSQICALSILKLYLKNNLDVNDGRIEHNEKFYCLSERLIKSFLKIIKLKTPFINREDFYVNNNYEMEELDLDGSLWLLRRNVFQILLDADKIIMSNIFMRINIETILNLLKFFSDNNSLDSDMILKLLKSLEEKGILEIMMKRMLSTPCKDGTQYNNSNYNDNSHYTHNSLKSQNISSSTYSSSSSSSNLYNTNAENFNDIYTNNNGEEKRKKRKYYEENMHEIQRYEKRKRNNKSRIIDTTHFGVFVEELMTLIEHQTNNAINTPVVNHIEESDVFMENKACDVIHKLCSFYNDEIKSEVFLRNYNHFNLCIKILNEIKKKNNHVSSASEVASIFLRGVVLMLTTYILTIATEYESTKTFLYKPVIPFYNLHNEMLKKKKDIHVYHGEEIKQMISMNSKSMKDRYNNQFNQYGSNNKSSNLTNQNIDILKCDMEDVSSCNSRYSSFINQNWELEYNKKIKKNNSISNNEYNKKGDVESRDHANSWIPLISNQNDGSIDGVIIHSDDSSSQSFLVSKRKVYTFGRKSFESVNMYVDDNEEDEGEEDKSEDYEYCDDEQQNDVYEDTEEESDNYHMRKERRVHQKKKNSKVSINKKTNNSLSDDNNYSSDELEEFYLRKNLLDLCDNNNNNNNNDEPNNFKSQLNEILYKLSKKKKYARNSKKLKLLKKKIIKYKNVSKKLNFIFSLLEEILKIMLSVGLRVLSSISYHYLYEKNGIYKFINIFGSNIIRSNLRDKGSFLELCENMIKPKCLTLLQACTFIISGIIPCLGYVTTLFVDKKANKYFYIKELNNYLSLKMALNIWPMFLKITLQGLLTSRHLSSEMSVHKDNLHPIAECCISITSLATHFLTLFTIMIDNLSRYEIYFNLKKGMNTLGNNYPIPLILINSAKYIRIESKKNKYYDIEKAIRTILLQLTDCSVCDYENYVFNHYMVPQSISSFLYATRMNNDSNLENEHSSNNINAHETDYHDISINKNKALGNEMVKTYQSMYEDDYEQERIGIRSRSRRGIPLKKKSERNNSKEENVNNMDHNNNNNSNSNNNNFFHRGSYSTNPRNNNITCDRKNMEFLKKLMKNDHDAVQCLGKAYSVFHKNFERAQIAFVAVFLHLTGYKHGQIKGPHQNYNSAKNNNDNKNDHIIIEDSLENKKIKIACNLARQGVIDLISKSQASQYHKKSIEEYNTSSKNKKCKEEIQEQMSMEHFEGNNKRMNNVKSGSHNDFKNLVRESHQNINEIDPDDNNKSNVYSSIEQVNDLPLNKKKSPILHLSSDLDEKNDLNFCNFSKEELNYVNDVHPNGEKSSHNNKSNEFLAMDSIQKKREKQIEKILQKCEWIINTYPFGLCPVSVKENISQEWDEHFVFMRRNSYDIPITVRKMYSDRSNYQMLHEVATMPAVAVEPSVSSLSYLDQLFSHQNKINDDKLECIQFSTENIFGKSTTKNLFLLKKLLKTYKRNVCIREPSNQLDTNKYDKICLENNKQFHTYICNNKNVNFSNSCASCDSGEGNYYNDESNYYMNFHFSEKNNDHLSNNSLVLKYNNLCKTNNLEKFGELWLNARSTKNYVYHNDQDVQHIDEFNSNLMNYKPECFLFSLKSVDENDYIMRNENMNNVKWDPTGSHITKYTNSMFDYYDNASDMNLSELHGKFNAFYKPQKIIRSMNKQEFLPALYQEEMLRNQPYHTTANNNTTNIINTTKKKSFPSFDYFRNKYLPNNSIDFTINNAVDHTIDSKDMLQLKEILKFIMNDTDLETVLNIIRIEQLTSLCRYLISRSLKSMLCAGIFGGIKNPIVNMSKKNLSSNKRSQKGYNSNSDDIKKKKKSNCNENEGSLDKYNDKEKKNDKINNGDTKNSDDGKIDMDDKKYYNDDLKNSDYSKNNESNYLSLSKEPDDMLLPSPNYEKGISTCVKKNRFSVLSEAYKEENLLVNQRKYKNLDLNQKIFKNDKRKKGIFEQWRQKSTKSMQWPVILDLLVPSFSRGSYNECNRMISNMESSLFSVQNYGWMLLKLLHIIIIKFRSLTPLKTIMREIDEKNRNSNNNNNNNNTNNSNNSNNNNNINSHYMNQWNGSNIKDPFEYHYWFTQPMEYALSFTLTDITKSICIWYLRYNRKLIMNSSSFSEIIKNSMNTLWIESVLRLIALQICLGVKPLNDSRYVVPFLYHMFTICQPLLREVHISGDYLKKKLLVGNKILYYSNKNNSFLQVKCSYCHKSVCMSSRKMSSKMSPMETPLKSIRKGNSSEVSSKISYLNGHTYSNNDNRDNYDDDNCDNYDNYDNDNENDNCDNSKNDRGVKGYIHSERVQKKQKKIKHKIIKMKMYNLSEQEHEEILDNVITGIIIYHQTLQNNNQHINKMIILQNLKGFKIKEEYYTNENHYWALCVQQYKNSPLYTLPLKNLNKCIKHNNRNIFQTTKMNESDDTSCYYWSVSGDPVYNIYGNAKSISDVQLEICAHKKYDSNVRSYLKKNNFELEFSINTHMNDVVNIWIKRKSIIINKELIEITDHHSIPLFSKGKQKKEMQENEDEKIKNKGKNKTKTNDDKKKNSSINNNNDCYDINYKYDTYNHEENDGSHKEENKKYSNENENVEYLSEHFCDCMKVYTDQDYSNEDYSNDYNYNCDNYKNMYSDDKKNRDLYDHGDNNLNYKKLKLISWNLIQTILWGILVSGENVQMENSDQVISESTTKYIKKKICNIQDEIDVNGNNHNDYKDYKYAFYKLQRKSLIESVLKMIMSVLIKLCNIVKLYNDLTKNKKGSFYICINNTKISMKQVKDCERMITDFMYALIKCVQNSSTAAVTLLRCFLFGQDNPTYRFRKLNKIQINCKFYRLITECIKKAPSDADDISIFFNTYLDKKKTLMNNDNDKINTKTTKKTKKEKTTKCYKNEMYDEKATMENNKKNNMGDLKWNEGEAPAHPSKDKSKHYNDNNNNNNDDNNSNNNNDYNNKDHINYPDDYVYNNRCIKYKGMDLKMSNFFFKYYDTNMKKNYNESKIHGFFLLRCLPPIKMFPKQLVIQETQKLFQNENNFLFNSKKDGSSNNDKNDNSNKNRNNYNNNDDNNNNDDNNNNNDDNDDNDNINNNYNNNNNNNNRNNSNSNNSNNSDNNNINYYYNNTDYQIGEHNNMQIHSSSKENTLYPDDHQNVDISTTTNEGNSQCNSINNILGLIPRISYRNHPFDDLPQSEFFMSSRPSDDFEAHMEGRVLRVLRGLNLGGVVLCLAPLTFPALHVGPNEVNDIINFRIQTRGRFGVTVAPAECVLSNVSEVFDRNDVVGFRTNMCPPFRHDVFAANVQYELGDLLSVKFNVEDQQNQKCLRTELMVSGVSIGSVLEVLFEADSQIEFERRMNLIFIFQDPLTIVYEGPTFTMQYVDPNKNNANNFRNDKKNADEEFLNELYSLSGYDKKNFKKELRKIRMKKNEFYESVKLYQSILESDNEILKDLKHEVIIRMNTSLTNIVSYFKHLSSNGVIFNSENDYYYWNDTDDTLLRKITTKKKKKHLYNMNCNNKMNEKYELISLDTLLSNDEKKKKMNNMNILNNPNFKTKGGKKKKKINIHLSNDKEEDKDEEAKYVEGIKQEKHTYYDYSNNSLLYNENKDNSVDNYYSFGNKEDGNRDIFSYSEEKHYNIITYDNSQITSSDKNNDPNREKILEKKNFQDDSIMSNRQSDNKEEGTSFNLYADSSIYVNMNKKYKSHVDIHKTIREVLSIICVLGLNINGEPKENKQEKFSNDTNYIFDELPWLTSLSDLKNSVTYNLDRKCLELFFCNLVDIICMDVFLGSILNFVTHNINENNQRCTRDKHNIVSFKHNKNYKKVIQKTSELDSECYPNEEYNDEFFENRKGSPYFPSRSKNGNINSDRRKNYNIQNSDNSNIGDSELNVNVNDNDNSSCGSNSKDSLNVHARNVGTDINSSSESGNTNSNNENSLRNSIFMEENETIESYRNKTKRSLSKDKNAGDLSNDNTEEIYHNNRYKKEKNKDEKNKIKKNKSYKNKTHKNKKQKNKSSNADKMNKNSLYGYTLCLIGTKSIMCCCIILRTLLEMNSDGYYEPNEKMYASCKRLLNFIKLFFFIDIGISDVLIKYFAEKNKMMDMNFLFDKRKQTQNGNNNSEICSTSSFLNSFVKNTNGNNKKKNNNHNDNHMDCMNWKEEVVFYNQKYHDNMHTKDLLNNKEDNQSSYISTNGKNKDTKDAVQNEYINILEIVNYCGIPNNFLEYFDISTPTIKNQQVIAQNDSFDLWIYIMNLLICFNSQNKYSLSFPQSINQLSENSIKNTLFDLEYSKFYFSNKILRKSVKFYASWLLKKYIIDMTCVMASLVPKLFIDELKTNLMKINEGVRSGEEIENMRNVQNKYTNSQDSVNYSSANTKEMNHKTIVPKCCFENEKTKLDHVVNNKEGHQMGFDSFNDKKDGLHNIHHAKSCEEKNNTKSNSYNNYNNYDNYNNINKYSCYNDKEEYQHELLCINNDYTHHNKTQGNFNDKLMHAKKKYNSKYRKVNKVEHIGQLLNAHLRNKEEILNIFSIMYLFRICIYYLGRSKDFRKEDYWQNFQGQLRNAKIKENVYKLLNEKSCKSSLLFGWQRIFYQCVVSWDDEKLVDQLLIIIQSELLYHLIGSVAQSMSQKRVKVEQFYAISPSVHVAHWMIDTFVRHPLCPSKIRSCCITPMTVTSLFGLIMNGNRLPIFLGIDVCRLVYWCCVVYILQNNQMHKHYKKLNNIDILTQLNITMEEPLNNDLEYTTCANQKKMITKNYHNTKSNKQHNNYFSTRGKMQKVKCNYYSFLSYVFHCVNICGSSVINQIISFNNNDVGYKNNVNKNKGNDNVSNNNNNNNNNININSSSNNNNNNSSSNNNNNNSSNNNNNSSNNNNNSSSSNNNNVRNSNNEHVNNIIDNLNNNINDILNCIQNSSNNRVLNNHFSGISSVSNETIYNLNITNRRNSHNISSNNINNTNTLQENTETNNTSNVNNLGGINSLYVNGTNGNLKTDKILLHNFSNFDLMENKEPSMYNSMKMNASLLVHYFACAAYYIKRADVYNIMNYYNEHTHANFKQYCLYLYVVDHVSKIYSKHIKRKINLKKKGGKKDDQLMTSSFFSDLMKKDPNEKSHMCYDDYTNNKYDNNNNKNNLVNNENELIVRKDSKISSKNYSFNSDYKHADKTKCRKHTYDESYKGQYPELFVDDVLHIPKKLSANIIINMNEKIHHISSSNSNTIKIKIRDMFVLPKQNDKSFIHKGIFSTHHNKPFYDKEDKYMFGEKNIVEHKNKQKQLYADHSNHQNKKHFTYNENKDKFNDKSNCNLKQKINRLNSEENERIEKINQKNFKHPNIIFSADNSFNYILHEIKFKKIQEFVYLNSNVIDEKVDLDTIEKITLGSYIELTDIYNLPGSFFLIGNSELYSGSSNLCSSSFTISLILVDNNADNMSDGNFNNFPNIEIGVINRKKYFEIKLEEDQNEDEDKIEIEIEEEKENENEKEVEKDENVHDEKDKVEQIEHEKKKEKDDKEAWLLHYDDGKDTNVKVKKFSNCRISKNEEDNIAYRLRNKELLGEKNITSKNSKFLYDKNVVDESLKCTRKNEDEYEGTEKRHSSNIPTDINKIAHVSLTKYINNEKIEKSKTRGGKRVQNVVEKLRNTLNDNNIKEDILNENHNKNNININSNINSNNNMMRGKMFHENLCDINMKNLGSNFYHSKYADLNKTNYITLNISDGNVNSKGFDCTDNNIENMKELLTNKMSGILNITVQIVGKKILWFANNILIFCKDFSYEMKEFLPFLKVSPIESKKIPKNNGSNKPSVHMKFTEMNEKTFVSPLSNFYFKFENMHKLKYENDCINTNKLWSKCLWKPVFFILPDVNNNSDNNVDVPGTSTHDLVSTKMNTHVNVNNNNMANNTNDTNYLNHSIIKKKMVPSIIPQSSNEIVIKYNKYHNTYGHIEYEDQFANTLFVSPNIQIKSEPINITYYMYCKNLQGKKCKLLCMENIKNIRTISIKNYYGFINLCNQYKHNEKPTSSSMEQKNSNNNVSYSHHNMYQVQQKPYSKIFDTRKNVESENSNNKADSILKQHLNRIINKSEDLRINNKGTLDICNKLLLSNECKTNEKKKKTGSNNIGSNTNIHELSDNNRGQHTSYYHEQLLSESLSKNVIHSNYINDYFTLNNDNKNNTSSSSNNNNNNKNNNNNNDNNNDNDNICSNSNNNVHIKYKLNQIPKIRKHIHHNIKYSSIQEINDNSHYSNKNIIEEKKQKENSNDMHNPKKNEGHYYIADPSNEKEILYDNKNNENGYSNNFLDDNNALHKHVHNKITLKGSNTYYDMDKIKDKQIEYFSNDSSNYSLYYIGCKEFKLCIDSYDSIFPAKPFIFNCTVNFKEEENYYHKKNYLTNSVGIIWGIYRWLWKSNGKFICPLRLPLCVSEFPSEKIEECEIDVVGYKSNDNLCIEFQPLYQCLLFYKNGTYQFGFKFDTFYNYRNLKNTFLSEHNGDMNMDRVHQNISKLSYSSSISNANFNDNFFVKRFVHNKYEQVSTEKNDLQKMSKKKDDKINNYDDNMMNNYDDGNNNNNNNDSMNNHKDDMNNYNDNINNYVESMNNYDDIMNKGHVVTQNNLTLNSEHNTKVNISNFFPLSNMSSVSNMYTISNERKSSNKGNGTNNVVKARVERRGKYKGMNGININNDNDRDEDNNKDKDDGNHDNVNNINSFYNKDRMISYDNLKQEKQNDTVMRIKNHVNMIKLYNCLLLNDCENVSSILINNPELLTKSNENMSEISFEHYYQMNSDDFPYELISSMKNIMHEKYLTPLMLACRIGCEECVQNIIEKGKVNPNKSCHRIEKETPLMVAAQYGHSRIVCMLICVYGVQVNKKDIKGNTALHKILLNYSNTEGKKNSTIKIVQLLLKLGADLTIKNKKGISVEDLVQKKLIKNEKIENLLNIWITLIIKNKKKHEGRYIPRNIIPGLLSNCSIVVGFPKGINGNVPNECGVKINSFVVGGEELVNVRYHKEKPTKHTFDNNYDNNYDNNYDNNYDQDGGNNIYNNAHSNVYNNGDYKNNLNKDDHPCYINFNYDKLNYNYNKWRVRTKEEEYYSCDNSSSNSSISKFGNLEKKIIEDHEKYKFSKYGGYPNGLCYKGEKNTHYNKGFEGMNSLEFDAFSGCKNMYEDTYDKENEEKLLYNNIKDNGLKEIDQEINHSNDNIKAFLKDDDEKDDDEYQKPYDKKVINKNKNDNYDKNDNYDKKDNYDTNDKNDKNNCDDNIILSGGKKDKRNKKVMNTNSSGRRTISKNSPNLSSAKNIKCSKTSTYNSEKYNSNERNSNLENHAIPIDHKDSVDETFVFIEKQKRNNKINTNDSMTYNPVTHEKENILNYILVHTYIDGKLGIRSASNHDMETEHGMDNIFETENKKNKALNSNMSNNNNNNNNSNNNNNNNSNNNNNNYNNNYNNNNNNCIYQEFYMLRKDKKKRKHLILSNLQNNLFNYHDLKYSLIEFINKSGVFSDIIKGHSYLDSKKKIPKFDELKNSLIEANNELDIIKGFKKFLELFDFLYMDDRLKYFLNIDLRKNLENSRNIVDLGYILLKIDSFCCIFNSFKLQWKDNSHEEWKKKLLKGIGILNEFSDIKWITDSYTIFKYEEEILESASFIDKILQNGNYMVFYNNLMNMIHDKNIHLKNGLYDSHIFNDMLKNINIEHFNRDTILYDICSKQNILKNYFIQERNKKYAMNNHDSRVINEKYKNYMNEYFVNKKLKGHSNNKDLYLSMNDSEDELIYSKEKKYKKHQTCDKYIYKSEMKEEMYNKSNELYNNSLNNSNNINNHSEFYNNGVNRKGDHTYANEKDLSMTSLDCKNHMYGEPQPKDKTYKKGMYDEERKQSMFNTSENTEQHDLINKVSGKEEDVRKPKQRNIRSKRLEDIIDKMYEDNDISNRENSKKNIDGLNNISGNGRIKFPSYSKNLLRYRNGNFLLNYSNNIFEKGREDESLNSHSPRVTSNLLASYSNERHGIKLAFMNSGEQGKVMKHTYNDNVSNNVSNNNNIQGEYNHKGDVPHNKFIEKNHYTKNGTNILSSLNKHNHLNTQEENNSLENNYSCETFCDEYDSEESEFELICEVHFTSKPNEEIMTREQFNKMWPQTLDMYILHIYDLISSYMDSPEKISLFIYHAFDMEKIKKKLPSKSSQLWKRINMSLDDFIEEIKNVHNYTMRIIYQSNYKRYGMLPPNFKKYFTLSEECLKNIAKNKIIMNMDYYKNYIYEENKKMFLKIIQDRIYLLNKFNIYFENCLPITSILFNKPVINLEEQGLRTLECPLCFFMSNDSYFPWTYKKRNTHLFQYNNNNNLCLVQKMRSELYDNNNLMSKNVSMLSLYNNTNYSNNDNNSIVGQSNYPIKVEGNHINENYKNCAEHNHYDYSLNKNYSNEKSIYVKNSKQIDDIKKIKSGNEYIIMDSIQSLDKNSTIVKKGSFFLNNGKGSYNSYTEIEDKDWLLGNVENLNNHNIYPDNEINYKNNNHEDNNYNCYQNHLCGNESEEENEIFDCEKYCKNMYTSNKMVLAMGSSDLPIQLSSYLFIKKLLKHDTCLKLWKECLKYITSSSSEKSNLTLRIDRGMAATAKHIAHTMWYQSTYSLLNIDTDKLRGKPRDRPFMVVFVGEGATDFGGPFHEYLSSISREVMGKLSDSPDKSLPVFPLCIPCPNYTQAIGARQDTVIINPQSTPYVVKEWDYIGEVDVIDNLESFRWQILNIYNSIKDIKKKLQKTAKDSYEDYKQKMEENGSDDGLENIMPVKGKSKTKGKYKKKNKSNKMNMGSDNILKDGVHKDNNNQKGHKYDEKNICNDKNIQEMTSKEKMYFYTSKKSVTFEKLEENEKMDYQIENKYDYPFVCDACEYDSDIYEIINNASLKSRKLFMNKIWKKKKCLDDEGDKNVLLRDPHENENMRDDIRNNMNNNNNNNNNNNNNNNNNNNNNNNNNNNNNNNNNNNNLNSIGGSKNTMTDGKKKNKFIIDYDEKTIKAMELAMYESLGRVMGMCVCIASALNICFNPIIWKKICGVPLELQDLADYDFVAVEMLKTLKMLNSEKSNEWNMELKQSLGDMTFITEDSGGNSIELIKNGMNIPINFDNLGLFIRLMTKCKMNESSKGIRHLLKGFSSVIPLGRLRLLYDFKDVEHMVCGEREINIEVLKAHTWSNDLNIKDKLFTVLEEFTNEQLQSFLRFVSGRSRLPTTKNDWYMIIDVENPNKNISQIDQRLPTAVTCGFRLLLPQYSSLDILKERLLYAIKNCTAIDLDAYVVHDQMQLMYGE</sequence>
<organism>
    <name type="scientific">Plasmodium falciparum (isolate 3D7)</name>
    <dbReference type="NCBI Taxonomy" id="36329"/>
    <lineage>
        <taxon>Eukaryota</taxon>
        <taxon>Sar</taxon>
        <taxon>Alveolata</taxon>
        <taxon>Apicomplexa</taxon>
        <taxon>Aconoidasida</taxon>
        <taxon>Haemosporida</taxon>
        <taxon>Plasmodiidae</taxon>
        <taxon>Plasmodium</taxon>
        <taxon>Plasmodium (Laverania)</taxon>
    </lineage>
</organism>
<comment type="function">
    <text evidence="1">Putative E3 ubiquitin-protein ligase.</text>
</comment>
<comment type="catalytic activity">
    <reaction>
        <text>S-ubiquitinyl-[E2 ubiquitin-conjugating enzyme]-L-cysteine + [acceptor protein]-L-lysine = [E2 ubiquitin-conjugating enzyme]-L-cysteine + N(6)-ubiquitinyl-[acceptor protein]-L-lysine.</text>
        <dbReference type="EC" id="2.3.2.26"/>
    </reaction>
</comment>
<comment type="pathway">
    <text>Protein modification; protein ubiquitination.</text>
</comment>
<comment type="subcellular location">
    <subcellularLocation>
        <location evidence="5">Membrane</location>
        <topology evidence="5">Multi-pass membrane protein</topology>
    </subcellularLocation>
</comment>
<comment type="biotechnology">
    <text>Possible candidate for an effective malaria vaccine as determined by epitope response in sera.</text>
</comment>
<dbReference type="EC" id="2.3.2.26"/>
<dbReference type="EMBL" id="AL844505">
    <property type="protein sequence ID" value="CAG25094.1"/>
    <property type="molecule type" value="Genomic_DNA"/>
</dbReference>
<dbReference type="RefSeq" id="XP_966264.1">
    <property type="nucleotide sequence ID" value="XM_961171.1"/>
</dbReference>
<dbReference type="SMR" id="C6KTB7"/>
<dbReference type="BioGRID" id="1210395">
    <property type="interactions" value="10"/>
</dbReference>
<dbReference type="FunCoup" id="C6KTB7">
    <property type="interactions" value="316"/>
</dbReference>
<dbReference type="IntAct" id="C6KTB7">
    <property type="interactions" value="9"/>
</dbReference>
<dbReference type="STRING" id="36329.C6KTB7"/>
<dbReference type="PaxDb" id="5833-PFF1365c"/>
<dbReference type="EnsemblProtists" id="CAG25094">
    <property type="protein sequence ID" value="CAG25094"/>
    <property type="gene ID" value="PF3D7_0628100"/>
</dbReference>
<dbReference type="KEGG" id="pfa:PF3D7_0628100"/>
<dbReference type="VEuPathDB" id="PlasmoDB:PF3D7_0628100"/>
<dbReference type="HOGENOM" id="CLU_222710_0_0_1"/>
<dbReference type="InParanoid" id="C6KTB7"/>
<dbReference type="OMA" id="HYFACAA"/>
<dbReference type="OrthoDB" id="271273at2759"/>
<dbReference type="PhylomeDB" id="C6KTB7"/>
<dbReference type="UniPathway" id="UPA00143"/>
<dbReference type="Proteomes" id="UP000001450">
    <property type="component" value="Chromosome 6"/>
</dbReference>
<dbReference type="GO" id="GO:0016020">
    <property type="term" value="C:membrane"/>
    <property type="evidence" value="ECO:0007669"/>
    <property type="project" value="UniProtKB-SubCell"/>
</dbReference>
<dbReference type="GO" id="GO:0004842">
    <property type="term" value="F:ubiquitin-protein transferase activity"/>
    <property type="evidence" value="ECO:0007669"/>
    <property type="project" value="InterPro"/>
</dbReference>
<dbReference type="GO" id="GO:0016567">
    <property type="term" value="P:protein ubiquitination"/>
    <property type="evidence" value="ECO:0007669"/>
    <property type="project" value="UniProtKB-UniPathway"/>
</dbReference>
<dbReference type="Gene3D" id="1.25.40.20">
    <property type="entry name" value="Ankyrin repeat-containing domain"/>
    <property type="match status" value="1"/>
</dbReference>
<dbReference type="Gene3D" id="3.30.2410.10">
    <property type="entry name" value="Hect, E3 ligase catalytic domain"/>
    <property type="match status" value="1"/>
</dbReference>
<dbReference type="Gene3D" id="3.90.1750.10">
    <property type="entry name" value="Hect, E3 ligase catalytic domains"/>
    <property type="match status" value="1"/>
</dbReference>
<dbReference type="InterPro" id="IPR002110">
    <property type="entry name" value="Ankyrin_rpt"/>
</dbReference>
<dbReference type="InterPro" id="IPR036770">
    <property type="entry name" value="Ankyrin_rpt-contain_sf"/>
</dbReference>
<dbReference type="InterPro" id="IPR000569">
    <property type="entry name" value="HECT_dom"/>
</dbReference>
<dbReference type="InterPro" id="IPR035983">
    <property type="entry name" value="Hect_E3_ubiquitin_ligase"/>
</dbReference>
<dbReference type="InterPro" id="IPR050876">
    <property type="entry name" value="IgLON_domain"/>
</dbReference>
<dbReference type="PANTHER" id="PTHR42757">
    <property type="entry name" value="IGLON FAMILY OF IMMUNOGLOBULIN SUPERFAMILY-RELATED"/>
    <property type="match status" value="1"/>
</dbReference>
<dbReference type="PANTHER" id="PTHR42757:SF32">
    <property type="entry name" value="PROTEIN AMALGAM"/>
    <property type="match status" value="1"/>
</dbReference>
<dbReference type="Pfam" id="PF00023">
    <property type="entry name" value="Ank"/>
    <property type="match status" value="2"/>
</dbReference>
<dbReference type="SMART" id="SM00248">
    <property type="entry name" value="ANK"/>
    <property type="match status" value="3"/>
</dbReference>
<dbReference type="SMART" id="SM00119">
    <property type="entry name" value="HECTc"/>
    <property type="match status" value="1"/>
</dbReference>
<dbReference type="SUPFAM" id="SSF48403">
    <property type="entry name" value="Ankyrin repeat"/>
    <property type="match status" value="1"/>
</dbReference>
<dbReference type="SUPFAM" id="SSF56204">
    <property type="entry name" value="Hect, E3 ligase catalytic domain"/>
    <property type="match status" value="2"/>
</dbReference>
<dbReference type="PROSITE" id="PS50297">
    <property type="entry name" value="ANK_REP_REGION"/>
    <property type="match status" value="1"/>
</dbReference>
<dbReference type="PROSITE" id="PS50088">
    <property type="entry name" value="ANK_REPEAT"/>
    <property type="match status" value="1"/>
</dbReference>
<dbReference type="PROSITE" id="PS50237">
    <property type="entry name" value="HECT"/>
    <property type="match status" value="1"/>
</dbReference>
<gene>
    <name type="ORF">PFF1365c</name>
</gene>
<name>ALTH1_PLAF7</name>
<evidence type="ECO:0000250" key="1"/>
<evidence type="ECO:0000255" key="2"/>
<evidence type="ECO:0000255" key="3">
    <source>
        <dbReference type="PROSITE-ProRule" id="PRU00104"/>
    </source>
</evidence>
<evidence type="ECO:0000256" key="4">
    <source>
        <dbReference type="SAM" id="MobiDB-lite"/>
    </source>
</evidence>
<evidence type="ECO:0000305" key="5"/>
<feature type="chain" id="PRO_0000371259" description="Putative E3 ubiquitin-protein ligase protein PFF1365c">
    <location>
        <begin position="1"/>
        <end position="10287"/>
    </location>
</feature>
<feature type="transmembrane region" description="Helical" evidence="2">
    <location>
        <begin position="1821"/>
        <end position="1841"/>
    </location>
</feature>
<feature type="transmembrane region" description="Helical" evidence="2">
    <location>
        <begin position="1860"/>
        <end position="1880"/>
    </location>
</feature>
<feature type="transmembrane region" description="Helical" evidence="2">
    <location>
        <begin position="1900"/>
        <end position="1920"/>
    </location>
</feature>
<feature type="transmembrane region" description="Helical" evidence="2">
    <location>
        <begin position="5058"/>
        <end position="5078"/>
    </location>
</feature>
<feature type="transmembrane region" description="Helical" evidence="2">
    <location>
        <begin position="5106"/>
        <end position="5126"/>
    </location>
</feature>
<feature type="transmembrane region" description="Helical" evidence="2">
    <location>
        <begin position="5552"/>
        <end position="5572"/>
    </location>
</feature>
<feature type="transmembrane region" description="Helical" evidence="2">
    <location>
        <begin position="5716"/>
        <end position="5736"/>
    </location>
</feature>
<feature type="transmembrane region" description="Helical" evidence="2">
    <location>
        <begin position="5815"/>
        <end position="5835"/>
    </location>
</feature>
<feature type="repeat" description="TPR 1">
    <location>
        <begin position="47"/>
        <end position="82"/>
    </location>
</feature>
<feature type="repeat" description="TPR 2">
    <location>
        <begin position="631"/>
        <end position="665"/>
    </location>
</feature>
<feature type="repeat" description="ANK 1">
    <location>
        <begin position="2116"/>
        <end position="2145"/>
    </location>
</feature>
<feature type="repeat" description="TPR 3">
    <location>
        <begin position="2141"/>
        <end position="2175"/>
    </location>
</feature>
<feature type="repeat" description="ANK 2">
    <location>
        <begin position="6004"/>
        <end position="6032"/>
    </location>
</feature>
<feature type="repeat" description="TPR 4">
    <location>
        <begin position="6051"/>
        <end position="6084"/>
    </location>
</feature>
<feature type="repeat" description="TPR 5">
    <location>
        <begin position="7347"/>
        <end position="7380"/>
    </location>
</feature>
<feature type="repeat" description="TPR 6">
    <location>
        <begin position="7577"/>
        <end position="7610"/>
    </location>
</feature>
<feature type="repeat" description="ANK 3">
    <location>
        <begin position="7809"/>
        <end position="7839"/>
    </location>
</feature>
<feature type="repeat" description="ANK 4">
    <location>
        <begin position="7845"/>
        <end position="7875"/>
    </location>
</feature>
<feature type="repeat" description="ANK 5">
    <location>
        <begin position="7880"/>
        <end position="7917"/>
    </location>
</feature>
<feature type="repeat" description="TPR 7">
    <location>
        <begin position="8782"/>
        <end position="8815"/>
    </location>
</feature>
<feature type="repeat" description="TPR 8">
    <location>
        <begin position="9550"/>
        <end position="9584"/>
    </location>
</feature>
<feature type="domain" description="HECT" evidence="3">
    <location>
        <begin position="9938"/>
        <end position="10273"/>
    </location>
</feature>
<feature type="region of interest" description="Disordered" evidence="4">
    <location>
        <begin position="566"/>
        <end position="592"/>
    </location>
</feature>
<feature type="region of interest" description="Disordered" evidence="4">
    <location>
        <begin position="740"/>
        <end position="823"/>
    </location>
</feature>
<feature type="region of interest" description="Disordered" evidence="4">
    <location>
        <begin position="1221"/>
        <end position="1251"/>
    </location>
</feature>
<feature type="region of interest" description="Disordered" evidence="4">
    <location>
        <begin position="1599"/>
        <end position="1670"/>
    </location>
</feature>
<feature type="region of interest" description="Disordered" evidence="4">
    <location>
        <begin position="2070"/>
        <end position="2112"/>
    </location>
</feature>
<feature type="region of interest" description="Disordered" evidence="4">
    <location>
        <begin position="2854"/>
        <end position="2945"/>
    </location>
</feature>
<feature type="region of interest" description="Disordered" evidence="4">
    <location>
        <begin position="3087"/>
        <end position="3113"/>
    </location>
</feature>
<feature type="region of interest" description="Disordered" evidence="4">
    <location>
        <begin position="3303"/>
        <end position="3344"/>
    </location>
</feature>
<feature type="region of interest" description="Disordered" evidence="4">
    <location>
        <begin position="3561"/>
        <end position="3599"/>
    </location>
</feature>
<feature type="region of interest" description="Disordered" evidence="4">
    <location>
        <begin position="3942"/>
        <end position="3998"/>
    </location>
</feature>
<feature type="region of interest" description="Disordered" evidence="4">
    <location>
        <begin position="4076"/>
        <end position="4157"/>
    </location>
</feature>
<feature type="region of interest" description="Disordered" evidence="4">
    <location>
        <begin position="4695"/>
        <end position="4716"/>
    </location>
</feature>
<feature type="region of interest" description="Disordered" evidence="4">
    <location>
        <begin position="4886"/>
        <end position="4972"/>
    </location>
</feature>
<feature type="region of interest" description="Disordered" evidence="4">
    <location>
        <begin position="4984"/>
        <end position="5051"/>
    </location>
</feature>
<feature type="region of interest" description="Disordered" evidence="4">
    <location>
        <begin position="5848"/>
        <end position="5917"/>
    </location>
</feature>
<feature type="region of interest" description="Disordered" evidence="4">
    <location>
        <begin position="6495"/>
        <end position="6527"/>
    </location>
</feature>
<feature type="region of interest" description="Disordered" evidence="4">
    <location>
        <begin position="7123"/>
        <end position="7147"/>
    </location>
</feature>
<feature type="region of interest" description="Disordered" evidence="4">
    <location>
        <begin position="7183"/>
        <end position="7217"/>
    </location>
</feature>
<feature type="region of interest" description="Disordered" evidence="4">
    <location>
        <begin position="7571"/>
        <end position="7590"/>
    </location>
</feature>
<feature type="region of interest" description="Disordered" evidence="4">
    <location>
        <begin position="7653"/>
        <end position="7712"/>
    </location>
</feature>
<feature type="region of interest" description="Disordered" evidence="4">
    <location>
        <begin position="8208"/>
        <end position="8300"/>
    </location>
</feature>
<feature type="region of interest" description="Disordered" evidence="4">
    <location>
        <begin position="8413"/>
        <end position="8448"/>
    </location>
</feature>
<feature type="region of interest" description="Disordered" evidence="4">
    <location>
        <begin position="9795"/>
        <end position="9818"/>
    </location>
</feature>
<feature type="region of interest" description="Disordered" evidence="4">
    <location>
        <begin position="9913"/>
        <end position="9979"/>
    </location>
</feature>
<feature type="compositionally biased region" description="Low complexity" evidence="4">
    <location>
        <begin position="566"/>
        <end position="589"/>
    </location>
</feature>
<feature type="compositionally biased region" description="Low complexity" evidence="4">
    <location>
        <begin position="767"/>
        <end position="810"/>
    </location>
</feature>
<feature type="compositionally biased region" description="Low complexity" evidence="4">
    <location>
        <begin position="1221"/>
        <end position="1235"/>
    </location>
</feature>
<feature type="compositionally biased region" description="Low complexity" evidence="4">
    <location>
        <begin position="1242"/>
        <end position="1251"/>
    </location>
</feature>
<feature type="compositionally biased region" description="Acidic residues" evidence="4">
    <location>
        <begin position="1601"/>
        <end position="1635"/>
    </location>
</feature>
<feature type="compositionally biased region" description="Basic residues" evidence="4">
    <location>
        <begin position="1641"/>
        <end position="1653"/>
    </location>
</feature>
<feature type="compositionally biased region" description="Low complexity" evidence="4">
    <location>
        <begin position="1654"/>
        <end position="1670"/>
    </location>
</feature>
<feature type="compositionally biased region" description="Basic residues" evidence="4">
    <location>
        <begin position="2070"/>
        <end position="2080"/>
    </location>
</feature>
<feature type="compositionally biased region" description="Low complexity" evidence="4">
    <location>
        <begin position="2090"/>
        <end position="2107"/>
    </location>
</feature>
<feature type="compositionally biased region" description="Polar residues" evidence="4">
    <location>
        <begin position="2854"/>
        <end position="2865"/>
    </location>
</feature>
<feature type="compositionally biased region" description="Basic and acidic residues" evidence="4">
    <location>
        <begin position="2886"/>
        <end position="2929"/>
    </location>
</feature>
<feature type="compositionally biased region" description="Low complexity" evidence="4">
    <location>
        <begin position="3090"/>
        <end position="3113"/>
    </location>
</feature>
<feature type="compositionally biased region" description="Acidic residues" evidence="4">
    <location>
        <begin position="3316"/>
        <end position="3335"/>
    </location>
</feature>
<feature type="compositionally biased region" description="Basic and acidic residues" evidence="4">
    <location>
        <begin position="3567"/>
        <end position="3579"/>
    </location>
</feature>
<feature type="compositionally biased region" description="Basic and acidic residues" evidence="4">
    <location>
        <begin position="3965"/>
        <end position="3974"/>
    </location>
</feature>
<feature type="compositionally biased region" description="Low complexity" evidence="4">
    <location>
        <begin position="3975"/>
        <end position="3992"/>
    </location>
</feature>
<feature type="compositionally biased region" description="Basic and acidic residues" evidence="4">
    <location>
        <begin position="4079"/>
        <end position="4094"/>
    </location>
</feature>
<feature type="compositionally biased region" description="Low complexity" evidence="4">
    <location>
        <begin position="4095"/>
        <end position="4116"/>
    </location>
</feature>
<feature type="compositionally biased region" description="Low complexity" evidence="4">
    <location>
        <begin position="4124"/>
        <end position="4157"/>
    </location>
</feature>
<feature type="compositionally biased region" description="Polar residues" evidence="4">
    <location>
        <begin position="4906"/>
        <end position="4917"/>
    </location>
</feature>
<feature type="compositionally biased region" description="Low complexity" evidence="4">
    <location>
        <begin position="4918"/>
        <end position="4942"/>
    </location>
</feature>
<feature type="compositionally biased region" description="Low complexity" evidence="4">
    <location>
        <begin position="4953"/>
        <end position="4972"/>
    </location>
</feature>
<feature type="compositionally biased region" description="Basic residues" evidence="4">
    <location>
        <begin position="5026"/>
        <end position="5045"/>
    </location>
</feature>
<feature type="compositionally biased region" description="Basic and acidic residues" evidence="4">
    <location>
        <begin position="6501"/>
        <end position="6527"/>
    </location>
</feature>
<feature type="compositionally biased region" description="Polar residues" evidence="4">
    <location>
        <begin position="7129"/>
        <end position="7147"/>
    </location>
</feature>
<feature type="compositionally biased region" description="Low complexity" evidence="4">
    <location>
        <begin position="7571"/>
        <end position="7583"/>
    </location>
</feature>
<feature type="compositionally biased region" description="Basic and acidic residues" evidence="4">
    <location>
        <begin position="7696"/>
        <end position="7706"/>
    </location>
</feature>
<feature type="compositionally biased region" description="Basic and acidic residues" evidence="4">
    <location>
        <begin position="8219"/>
        <end position="8259"/>
    </location>
</feature>
<feature type="compositionally biased region" description="Polar residues" evidence="4">
    <location>
        <begin position="8277"/>
        <end position="8300"/>
    </location>
</feature>
<feature type="compositionally biased region" description="Low complexity" evidence="4">
    <location>
        <begin position="8415"/>
        <end position="8448"/>
    </location>
</feature>
<feature type="compositionally biased region" description="Basic and acidic residues" evidence="4">
    <location>
        <begin position="9800"/>
        <end position="9818"/>
    </location>
</feature>
<feature type="compositionally biased region" description="Basic and acidic residues" evidence="4">
    <location>
        <begin position="9913"/>
        <end position="9930"/>
    </location>
</feature>
<feature type="compositionally biased region" description="Low complexity" evidence="4">
    <location>
        <begin position="9931"/>
        <end position="9971"/>
    </location>
</feature>
<feature type="active site" description="Glycyl thioester intermediate" evidence="3">
    <location>
        <position position="10241"/>
    </location>
</feature>
<keyword id="KW-0040">ANK repeat</keyword>
<keyword id="KW-0472">Membrane</keyword>
<keyword id="KW-0477">Merozoite</keyword>
<keyword id="KW-1185">Reference proteome</keyword>
<keyword id="KW-0677">Repeat</keyword>
<keyword id="KW-0802">TPR repeat</keyword>
<keyword id="KW-0808">Transferase</keyword>
<keyword id="KW-0812">Transmembrane</keyword>
<keyword id="KW-1133">Transmembrane helix</keyword>
<keyword id="KW-0833">Ubl conjugation pathway</keyword>
<protein>
    <recommendedName>
        <fullName>Putative E3 ubiquitin-protein ligase protein PFF1365c</fullName>
        <ecNumber>2.3.2.26</ecNumber>
    </recommendedName>
    <alternativeName>
        <fullName>HECT-type E3 ubiquitin transferase PFF1365c</fullName>
    </alternativeName>
</protein>